<dbReference type="EMBL" id="M11901">
    <property type="protein sequence ID" value="AAA41948.1"/>
    <property type="molecule type" value="mRNA"/>
</dbReference>
<dbReference type="PIR" id="B29149">
    <property type="entry name" value="B29149"/>
</dbReference>
<dbReference type="GlyGen" id="P10164">
    <property type="glycosylation" value="1 site"/>
</dbReference>
<dbReference type="PaxDb" id="10116-ENSRNOP00000048827"/>
<dbReference type="InParanoid" id="P10164"/>
<dbReference type="Proteomes" id="UP000002494">
    <property type="component" value="Unplaced"/>
</dbReference>
<dbReference type="GO" id="GO:0005576">
    <property type="term" value="C:extracellular region"/>
    <property type="evidence" value="ECO:0007669"/>
    <property type="project" value="UniProtKB-SubCell"/>
</dbReference>
<dbReference type="InterPro" id="IPR026086">
    <property type="entry name" value="Pro-rich"/>
</dbReference>
<dbReference type="PANTHER" id="PTHR23203">
    <property type="entry name" value="PROLINE-RICH PROTEIN"/>
    <property type="match status" value="1"/>
</dbReference>
<dbReference type="PANTHER" id="PTHR23203:SF21">
    <property type="entry name" value="PROLINE-RICH PROTEIN 2-RELATED"/>
    <property type="match status" value="1"/>
</dbReference>
<dbReference type="Pfam" id="PF15240">
    <property type="entry name" value="Pro-rich"/>
    <property type="match status" value="1"/>
</dbReference>
<dbReference type="SMART" id="SM01412">
    <property type="entry name" value="Pro-rich"/>
    <property type="match status" value="1"/>
</dbReference>
<proteinExistence type="evidence at transcript level"/>
<accession>P10164</accession>
<comment type="subcellular location">
    <subcellularLocation>
        <location evidence="1">Secreted</location>
    </subcellularLocation>
</comment>
<sequence length="172" mass="17416">MLVVLFTAVLLTLSYAQEPGDELQILDQTPNQKPPPPGFPPRPPANGSQQGPPPQGGPQQSPLQPGKPQDPPPQGSPQQKPPQPGKPQGPPPPGGPQKKPPQPGKPQGPPPPGGPQKKPPQPGKPQGPTPPGGPQQKPPQAGKPQGPPPPGGPQQKPPQPGNQQGPPPPGGP</sequence>
<reference key="1">
    <citation type="journal article" date="1985" name="J. Biol. Chem.">
        <title>Novel multigene families encoding highly repetitive peptide sequences. Sequence analyses of rat and mouse proline-rich protein cDNAs.</title>
        <authorList>
            <person name="Clements S."/>
            <person name="Mehansho H."/>
            <person name="Carlson D.M."/>
        </authorList>
    </citation>
    <scope>NUCLEOTIDE SEQUENCE [MRNA]</scope>
    <source>
        <tissue>Parotid gland</tissue>
    </source>
</reference>
<name>PRP2_RAT</name>
<evidence type="ECO:0000250" key="1"/>
<evidence type="ECO:0000255" key="2"/>
<evidence type="ECO:0000256" key="3">
    <source>
        <dbReference type="SAM" id="MobiDB-lite"/>
    </source>
</evidence>
<organism>
    <name type="scientific">Rattus norvegicus</name>
    <name type="common">Rat</name>
    <dbReference type="NCBI Taxonomy" id="10116"/>
    <lineage>
        <taxon>Eukaryota</taxon>
        <taxon>Metazoa</taxon>
        <taxon>Chordata</taxon>
        <taxon>Craniata</taxon>
        <taxon>Vertebrata</taxon>
        <taxon>Euteleostomi</taxon>
        <taxon>Mammalia</taxon>
        <taxon>Eutheria</taxon>
        <taxon>Euarchontoglires</taxon>
        <taxon>Glires</taxon>
        <taxon>Rodentia</taxon>
        <taxon>Myomorpha</taxon>
        <taxon>Muroidea</taxon>
        <taxon>Muridae</taxon>
        <taxon>Murinae</taxon>
        <taxon>Rattus</taxon>
    </lineage>
</organism>
<protein>
    <recommendedName>
        <fullName>Acidic proline-rich protein PRP25</fullName>
    </recommendedName>
</protein>
<keyword id="KW-1185">Reference proteome</keyword>
<keyword id="KW-0677">Repeat</keyword>
<keyword id="KW-0964">Secreted</keyword>
<keyword id="KW-0732">Signal</keyword>
<feature type="signal peptide" evidence="2">
    <location>
        <begin position="1"/>
        <end position="16"/>
    </location>
</feature>
<feature type="chain" id="PRO_0000022134" description="Acidic proline-rich protein PRP25">
    <location>
        <begin position="17"/>
        <end position="172" status="greater than"/>
    </location>
</feature>
<feature type="region of interest" description="Disordered" evidence="3">
    <location>
        <begin position="22"/>
        <end position="172"/>
    </location>
</feature>
<feature type="compositionally biased region" description="Pro residues" evidence="3">
    <location>
        <begin position="32"/>
        <end position="44"/>
    </location>
</feature>
<feature type="compositionally biased region" description="Low complexity" evidence="3">
    <location>
        <begin position="57"/>
        <end position="67"/>
    </location>
</feature>
<feature type="compositionally biased region" description="Pro residues" evidence="3">
    <location>
        <begin position="68"/>
        <end position="137"/>
    </location>
</feature>
<feature type="compositionally biased region" description="Pro residues" evidence="3">
    <location>
        <begin position="145"/>
        <end position="172"/>
    </location>
</feature>
<feature type="non-terminal residue">
    <location>
        <position position="172"/>
    </location>
</feature>